<dbReference type="EMBL" id="AF085726">
    <property type="protein sequence ID" value="AAG10336.1"/>
    <property type="molecule type" value="Genomic_DNA"/>
</dbReference>
<dbReference type="EMBL" id="CP001184">
    <property type="protein sequence ID" value="ACI60186.1"/>
    <property type="molecule type" value="Genomic_DNA"/>
</dbReference>
<dbReference type="RefSeq" id="WP_004025994.1">
    <property type="nucleotide sequence ID" value="NC_011374.1"/>
</dbReference>
<dbReference type="SMR" id="B5ZBS5"/>
<dbReference type="STRING" id="565575.UUR10_0473"/>
<dbReference type="KEGG" id="uue:UUR10_0473"/>
<dbReference type="eggNOG" id="COG0829">
    <property type="taxonomic scope" value="Bacteria"/>
</dbReference>
<dbReference type="HOGENOM" id="CLU_056339_5_0_14"/>
<dbReference type="OrthoDB" id="9807968at2"/>
<dbReference type="Proteomes" id="UP000002018">
    <property type="component" value="Chromosome"/>
</dbReference>
<dbReference type="GO" id="GO:0005737">
    <property type="term" value="C:cytoplasm"/>
    <property type="evidence" value="ECO:0007669"/>
    <property type="project" value="UniProtKB-SubCell"/>
</dbReference>
<dbReference type="GO" id="GO:0016151">
    <property type="term" value="F:nickel cation binding"/>
    <property type="evidence" value="ECO:0007669"/>
    <property type="project" value="UniProtKB-UniRule"/>
</dbReference>
<dbReference type="HAMAP" id="MF_01384">
    <property type="entry name" value="UreD"/>
    <property type="match status" value="1"/>
</dbReference>
<dbReference type="InterPro" id="IPR002669">
    <property type="entry name" value="UreD"/>
</dbReference>
<dbReference type="PANTHER" id="PTHR33643">
    <property type="entry name" value="UREASE ACCESSORY PROTEIN D"/>
    <property type="match status" value="1"/>
</dbReference>
<dbReference type="PANTHER" id="PTHR33643:SF1">
    <property type="entry name" value="UREASE ACCESSORY PROTEIN D"/>
    <property type="match status" value="1"/>
</dbReference>
<dbReference type="Pfam" id="PF01774">
    <property type="entry name" value="UreD"/>
    <property type="match status" value="1"/>
</dbReference>
<comment type="function">
    <text evidence="1">Required for maturation of urease via the functional incorporation of the urease nickel metallocenter.</text>
</comment>
<comment type="subunit">
    <text evidence="1">UreD, UreF and UreG form a complex that acts as a GTP-hydrolysis-dependent molecular chaperone, activating the urease apoprotein by helping to assemble the nickel containing metallocenter of UreC. The UreE protein probably delivers the nickel (By similarity).</text>
</comment>
<comment type="subcellular location">
    <subcellularLocation>
        <location evidence="1">Cytoplasm</location>
    </subcellularLocation>
</comment>
<comment type="similarity">
    <text evidence="2">Belongs to the UreD family.</text>
</comment>
<evidence type="ECO:0000250" key="1"/>
<evidence type="ECO:0000305" key="2"/>
<accession>B5ZBS5</accession>
<accession>Q56563</accession>
<sequence>MILSKEKINNYAAYLYIKVAYDEAHNKMAHTVYFTNFYRSSKPLFLDEEDPINPCFQTISMGGGYVSGEVYRSDFEVEANARCIITTQSSAKAYKAVDGKTSEQHTNITLGKNSILEYISDNVIVYEDGKFAQFNNFKMDSTATLIYTECFGPGWSPHGSAYQYEKMYLNTKIYYDNKLVLFDNLKFQPRKNDESAFGIMDGYHYCGTMIVINQEVVEEDVIKIRDLVKEKYPDMDMIFGVSRMDIPGLGLRVLANTYYHVEKINAVAHDYFRRKLFNKKPLILRKP</sequence>
<protein>
    <recommendedName>
        <fullName>Urease accessory protein UreD</fullName>
    </recommendedName>
</protein>
<name>URED_UREU1</name>
<reference key="1">
    <citation type="journal article" date="2004" name="Int. J. Syst. Evol. Microbiol.">
        <title>Postgenomic taxonomy of human ureaplasmas - a case study based on multiple gene sequences.</title>
        <authorList>
            <person name="Kong F."/>
            <person name="Gilbert G.L."/>
        </authorList>
    </citation>
    <scope>NUCLEOTIDE SEQUENCE [GENOMIC DNA]</scope>
</reference>
<reference key="2">
    <citation type="submission" date="2008-10" db="EMBL/GenBank/DDBJ databases">
        <title>Genome sequence of Ureaplasma urealyticum serovar 10 ATCC-33699.</title>
        <authorList>
            <person name="Shrivastava S."/>
            <person name="Methe B.A."/>
            <person name="Glass J."/>
            <person name="White K."/>
            <person name="Duffy L.B."/>
        </authorList>
    </citation>
    <scope>NUCLEOTIDE SEQUENCE [LARGE SCALE GENOMIC DNA]</scope>
    <source>
        <strain>ATCC 33699 / Western</strain>
    </source>
</reference>
<keyword id="KW-0143">Chaperone</keyword>
<keyword id="KW-0963">Cytoplasm</keyword>
<keyword id="KW-0996">Nickel insertion</keyword>
<organism>
    <name type="scientific">Ureaplasma urealyticum serovar 10 (strain ATCC 33699 / Western)</name>
    <dbReference type="NCBI Taxonomy" id="565575"/>
    <lineage>
        <taxon>Bacteria</taxon>
        <taxon>Bacillati</taxon>
        <taxon>Mycoplasmatota</taxon>
        <taxon>Mycoplasmoidales</taxon>
        <taxon>Mycoplasmoidaceae</taxon>
        <taxon>Ureaplasma</taxon>
    </lineage>
</organism>
<proteinExistence type="inferred from homology"/>
<feature type="chain" id="PRO_0000380258" description="Urease accessory protein UreD">
    <location>
        <begin position="1"/>
        <end position="287"/>
    </location>
</feature>
<gene>
    <name type="primary">ureD</name>
    <name type="ordered locus">UUR10_0473</name>
</gene>